<keyword id="KW-0170">Cobalt</keyword>
<keyword id="KW-0963">Cytoplasm</keyword>
<keyword id="KW-0460">Magnesium</keyword>
<keyword id="KW-0479">Metal-binding</keyword>
<keyword id="KW-0520">NAD</keyword>
<keyword id="KW-0521">NADP</keyword>
<keyword id="KW-0560">Oxidoreductase</keyword>
<keyword id="KW-0664">Pyridoxine biosynthesis</keyword>
<keyword id="KW-1185">Reference proteome</keyword>
<keyword id="KW-0862">Zinc</keyword>
<proteinExistence type="inferred from homology"/>
<protein>
    <recommendedName>
        <fullName evidence="1">4-hydroxythreonine-4-phosphate dehydrogenase</fullName>
        <ecNumber evidence="1">1.1.1.262</ecNumber>
    </recommendedName>
    <alternativeName>
        <fullName evidence="1">4-(phosphohydroxy)-L-threonine dehydrogenase</fullName>
    </alternativeName>
</protein>
<comment type="function">
    <text evidence="1">Catalyzes the NAD(P)-dependent oxidation of 4-(phosphooxy)-L-threonine (HTP) into 2-amino-3-oxo-4-(phosphooxy)butyric acid which spontaneously decarboxylates to form 3-amino-2-oxopropyl phosphate (AHAP).</text>
</comment>
<comment type="catalytic activity">
    <reaction evidence="1">
        <text>4-(phosphooxy)-L-threonine + NAD(+) = 3-amino-2-oxopropyl phosphate + CO2 + NADH</text>
        <dbReference type="Rhea" id="RHEA:32275"/>
        <dbReference type="ChEBI" id="CHEBI:16526"/>
        <dbReference type="ChEBI" id="CHEBI:57279"/>
        <dbReference type="ChEBI" id="CHEBI:57540"/>
        <dbReference type="ChEBI" id="CHEBI:57945"/>
        <dbReference type="ChEBI" id="CHEBI:58452"/>
        <dbReference type="EC" id="1.1.1.262"/>
    </reaction>
</comment>
<comment type="cofactor">
    <cofactor evidence="1">
        <name>Zn(2+)</name>
        <dbReference type="ChEBI" id="CHEBI:29105"/>
    </cofactor>
    <cofactor evidence="1">
        <name>Mg(2+)</name>
        <dbReference type="ChEBI" id="CHEBI:18420"/>
    </cofactor>
    <cofactor evidence="1">
        <name>Co(2+)</name>
        <dbReference type="ChEBI" id="CHEBI:48828"/>
    </cofactor>
    <text evidence="1">Binds 1 divalent metal cation per subunit. Can use ions such as Zn(2+), Mg(2+) or Co(2+).</text>
</comment>
<comment type="pathway">
    <text evidence="1">Cofactor biosynthesis; pyridoxine 5'-phosphate biosynthesis; pyridoxine 5'-phosphate from D-erythrose 4-phosphate: step 4/5.</text>
</comment>
<comment type="subunit">
    <text evidence="1">Homodimer.</text>
</comment>
<comment type="subcellular location">
    <subcellularLocation>
        <location evidence="1">Cytoplasm</location>
    </subcellularLocation>
</comment>
<comment type="miscellaneous">
    <text evidence="1">The active site is located at the dimer interface.</text>
</comment>
<comment type="similarity">
    <text evidence="1">Belongs to the PdxA family.</text>
</comment>
<accession>C0QBU5</accession>
<dbReference type="EC" id="1.1.1.262" evidence="1"/>
<dbReference type="EMBL" id="CP001087">
    <property type="protein sequence ID" value="ACN14957.1"/>
    <property type="molecule type" value="Genomic_DNA"/>
</dbReference>
<dbReference type="RefSeq" id="WP_015903743.1">
    <property type="nucleotide sequence ID" value="NC_012108.1"/>
</dbReference>
<dbReference type="SMR" id="C0QBU5"/>
<dbReference type="STRING" id="177437.HRM2_18550"/>
<dbReference type="KEGG" id="dat:HRM2_18550"/>
<dbReference type="eggNOG" id="COG1995">
    <property type="taxonomic scope" value="Bacteria"/>
</dbReference>
<dbReference type="HOGENOM" id="CLU_040168_0_0_7"/>
<dbReference type="OrthoDB" id="9801783at2"/>
<dbReference type="UniPathway" id="UPA00244">
    <property type="reaction ID" value="UER00312"/>
</dbReference>
<dbReference type="Proteomes" id="UP000000442">
    <property type="component" value="Chromosome"/>
</dbReference>
<dbReference type="GO" id="GO:0005737">
    <property type="term" value="C:cytoplasm"/>
    <property type="evidence" value="ECO:0007669"/>
    <property type="project" value="UniProtKB-SubCell"/>
</dbReference>
<dbReference type="GO" id="GO:0050570">
    <property type="term" value="F:4-hydroxythreonine-4-phosphate dehydrogenase activity"/>
    <property type="evidence" value="ECO:0007669"/>
    <property type="project" value="UniProtKB-UniRule"/>
</dbReference>
<dbReference type="GO" id="GO:0046872">
    <property type="term" value="F:metal ion binding"/>
    <property type="evidence" value="ECO:0007669"/>
    <property type="project" value="UniProtKB-UniRule"/>
</dbReference>
<dbReference type="GO" id="GO:0051287">
    <property type="term" value="F:NAD binding"/>
    <property type="evidence" value="ECO:0007669"/>
    <property type="project" value="InterPro"/>
</dbReference>
<dbReference type="GO" id="GO:0042823">
    <property type="term" value="P:pyridoxal phosphate biosynthetic process"/>
    <property type="evidence" value="ECO:0007669"/>
    <property type="project" value="UniProtKB-UniRule"/>
</dbReference>
<dbReference type="GO" id="GO:0008615">
    <property type="term" value="P:pyridoxine biosynthetic process"/>
    <property type="evidence" value="ECO:0007669"/>
    <property type="project" value="UniProtKB-UniRule"/>
</dbReference>
<dbReference type="Gene3D" id="3.40.718.10">
    <property type="entry name" value="Isopropylmalate Dehydrogenase"/>
    <property type="match status" value="1"/>
</dbReference>
<dbReference type="HAMAP" id="MF_00536">
    <property type="entry name" value="PdxA"/>
    <property type="match status" value="1"/>
</dbReference>
<dbReference type="InterPro" id="IPR037510">
    <property type="entry name" value="PdxA"/>
</dbReference>
<dbReference type="InterPro" id="IPR005255">
    <property type="entry name" value="PdxA_fam"/>
</dbReference>
<dbReference type="NCBIfam" id="TIGR00557">
    <property type="entry name" value="pdxA"/>
    <property type="match status" value="1"/>
</dbReference>
<dbReference type="PANTHER" id="PTHR30004">
    <property type="entry name" value="4-HYDROXYTHREONINE-4-PHOSPHATE DEHYDROGENASE"/>
    <property type="match status" value="1"/>
</dbReference>
<dbReference type="PANTHER" id="PTHR30004:SF6">
    <property type="entry name" value="D-THREONATE 4-PHOSPHATE DEHYDROGENASE"/>
    <property type="match status" value="1"/>
</dbReference>
<dbReference type="Pfam" id="PF04166">
    <property type="entry name" value="PdxA"/>
    <property type="match status" value="1"/>
</dbReference>
<dbReference type="SUPFAM" id="SSF53659">
    <property type="entry name" value="Isocitrate/Isopropylmalate dehydrogenase-like"/>
    <property type="match status" value="1"/>
</dbReference>
<feature type="chain" id="PRO_1000211912" description="4-hydroxythreonine-4-phosphate dehydrogenase">
    <location>
        <begin position="1"/>
        <end position="340"/>
    </location>
</feature>
<feature type="binding site" evidence="1">
    <location>
        <position position="141"/>
    </location>
    <ligand>
        <name>substrate</name>
    </ligand>
</feature>
<feature type="binding site" evidence="1">
    <location>
        <position position="142"/>
    </location>
    <ligand>
        <name>substrate</name>
    </ligand>
</feature>
<feature type="binding site" evidence="1">
    <location>
        <position position="171"/>
    </location>
    <ligand>
        <name>a divalent metal cation</name>
        <dbReference type="ChEBI" id="CHEBI:60240"/>
        <note>ligand shared between dimeric partners</note>
    </ligand>
</feature>
<feature type="binding site" evidence="1">
    <location>
        <position position="216"/>
    </location>
    <ligand>
        <name>a divalent metal cation</name>
        <dbReference type="ChEBI" id="CHEBI:60240"/>
        <note>ligand shared between dimeric partners</note>
    </ligand>
</feature>
<feature type="binding site" evidence="1">
    <location>
        <position position="271"/>
    </location>
    <ligand>
        <name>a divalent metal cation</name>
        <dbReference type="ChEBI" id="CHEBI:60240"/>
        <note>ligand shared between dimeric partners</note>
    </ligand>
</feature>
<feature type="binding site" evidence="1">
    <location>
        <position position="279"/>
    </location>
    <ligand>
        <name>substrate</name>
    </ligand>
</feature>
<feature type="binding site" evidence="1">
    <location>
        <position position="288"/>
    </location>
    <ligand>
        <name>substrate</name>
    </ligand>
</feature>
<feature type="binding site" evidence="1">
    <location>
        <position position="297"/>
    </location>
    <ligand>
        <name>substrate</name>
    </ligand>
</feature>
<name>PDXA_DESAH</name>
<reference key="1">
    <citation type="journal article" date="2009" name="Environ. Microbiol.">
        <title>Genome sequence of Desulfobacterium autotrophicum HRM2, a marine sulfate reducer oxidizing organic carbon completely to carbon dioxide.</title>
        <authorList>
            <person name="Strittmatter A.W."/>
            <person name="Liesegang H."/>
            <person name="Rabus R."/>
            <person name="Decker I."/>
            <person name="Amann J."/>
            <person name="Andres S."/>
            <person name="Henne A."/>
            <person name="Fricke W.F."/>
            <person name="Martinez-Arias R."/>
            <person name="Bartels D."/>
            <person name="Goesmann A."/>
            <person name="Krause L."/>
            <person name="Puehler A."/>
            <person name="Klenk H.P."/>
            <person name="Richter M."/>
            <person name="Schuler M."/>
            <person name="Gloeckner F.O."/>
            <person name="Meyerdierks A."/>
            <person name="Gottschalk G."/>
            <person name="Amann R."/>
        </authorList>
    </citation>
    <scope>NUCLEOTIDE SEQUENCE [LARGE SCALE GENOMIC DNA]</scope>
    <source>
        <strain>ATCC 43914 / DSM 3382 / VKM B-1955 / HRM2</strain>
    </source>
</reference>
<organism>
    <name type="scientific">Desulforapulum autotrophicum (strain ATCC 43914 / DSM 3382 / VKM B-1955 / HRM2)</name>
    <name type="common">Desulfobacterium autotrophicum</name>
    <dbReference type="NCBI Taxonomy" id="177437"/>
    <lineage>
        <taxon>Bacteria</taxon>
        <taxon>Pseudomonadati</taxon>
        <taxon>Thermodesulfobacteriota</taxon>
        <taxon>Desulfobacteria</taxon>
        <taxon>Desulfobacterales</taxon>
        <taxon>Desulfobacteraceae</taxon>
        <taxon>Desulforapulum</taxon>
    </lineage>
</organism>
<sequence>MTDNRPVIGITMGDPVGIGPEIIVSALDDPFVYTVCRPLVLGDEGVMERAIDLKSARMDVHTTDTPAGGKYCHGTMDIVPLSRLDAATLLAGHPTPGTGKAMIDYITTGVDLAMDGKIQAIATCPITKTAMKLAGSKFHGHTELIADRTHTPRVAMMMAGDRLRVVLVTIHIPLCEVSARLNQAEILATISLTSETLKTKFGIPEPRIAVAGLNPHGGEDGMFGSEELEIIAPAVEQARSKGITVSGPFPPDTLFFNAANHKFDAVVCMYHDQGLIPFKMIHFSDGVNTTLGLPIIRTSVDHGTAYDIAWRGTADPSSLIAAIKMAALQATITGANRINR</sequence>
<evidence type="ECO:0000255" key="1">
    <source>
        <dbReference type="HAMAP-Rule" id="MF_00536"/>
    </source>
</evidence>
<gene>
    <name evidence="1" type="primary">pdxA</name>
    <name type="ordered locus">HRM2_18550</name>
</gene>